<name>KCNS1_RAT</name>
<dbReference type="EMBL" id="Y17606">
    <property type="protein sequence ID" value="CAA76804.1"/>
    <property type="molecule type" value="mRNA"/>
</dbReference>
<dbReference type="PIR" id="JE0275">
    <property type="entry name" value="JE0275"/>
</dbReference>
<dbReference type="RefSeq" id="NP_446406.1">
    <property type="nucleotide sequence ID" value="NM_053954.2"/>
</dbReference>
<dbReference type="RefSeq" id="XP_006235571.1">
    <property type="nucleotide sequence ID" value="XM_006235509.5"/>
</dbReference>
<dbReference type="RefSeq" id="XP_017446922.1">
    <property type="nucleotide sequence ID" value="XM_017591433.3"/>
</dbReference>
<dbReference type="SMR" id="O88758"/>
<dbReference type="FunCoup" id="O88758">
    <property type="interactions" value="11"/>
</dbReference>
<dbReference type="STRING" id="10116.ENSRNOP00000018364"/>
<dbReference type="PhosphoSitePlus" id="O88758"/>
<dbReference type="PaxDb" id="10116-ENSRNOP00000018364"/>
<dbReference type="ABCD" id="O88758">
    <property type="antibodies" value="1 sequenced antibody"/>
</dbReference>
<dbReference type="Ensembl" id="ENSRNOT00000018364.4">
    <property type="protein sequence ID" value="ENSRNOP00000018364.2"/>
    <property type="gene ID" value="ENSRNOG00000013681.4"/>
</dbReference>
<dbReference type="GeneID" id="117023"/>
<dbReference type="KEGG" id="rno:117023"/>
<dbReference type="UCSC" id="RGD:621524">
    <property type="organism name" value="rat"/>
</dbReference>
<dbReference type="AGR" id="RGD:621524"/>
<dbReference type="CTD" id="3787"/>
<dbReference type="RGD" id="621524">
    <property type="gene designation" value="Kcns1"/>
</dbReference>
<dbReference type="eggNOG" id="KOG3713">
    <property type="taxonomic scope" value="Eukaryota"/>
</dbReference>
<dbReference type="GeneTree" id="ENSGT00940000160096"/>
<dbReference type="HOGENOM" id="CLU_011722_4_1_1"/>
<dbReference type="InParanoid" id="O88758"/>
<dbReference type="OMA" id="CSGRYHE"/>
<dbReference type="OrthoDB" id="296522at2759"/>
<dbReference type="PhylomeDB" id="O88758"/>
<dbReference type="TreeFam" id="TF313103"/>
<dbReference type="Reactome" id="R-RNO-1296072">
    <property type="pathway name" value="Voltage gated Potassium channels"/>
</dbReference>
<dbReference type="PRO" id="PR:O88758"/>
<dbReference type="Proteomes" id="UP000002494">
    <property type="component" value="Chromosome 3"/>
</dbReference>
<dbReference type="Bgee" id="ENSRNOG00000013681">
    <property type="expression patterns" value="Expressed in frontal cortex and 7 other cell types or tissues"/>
</dbReference>
<dbReference type="GO" id="GO:0016020">
    <property type="term" value="C:membrane"/>
    <property type="evidence" value="ECO:0000318"/>
    <property type="project" value="GO_Central"/>
</dbReference>
<dbReference type="GO" id="GO:0005654">
    <property type="term" value="C:nucleoplasm"/>
    <property type="evidence" value="ECO:0007669"/>
    <property type="project" value="Ensembl"/>
</dbReference>
<dbReference type="GO" id="GO:0048471">
    <property type="term" value="C:perinuclear region of cytoplasm"/>
    <property type="evidence" value="ECO:0000250"/>
    <property type="project" value="UniProtKB"/>
</dbReference>
<dbReference type="GO" id="GO:0005886">
    <property type="term" value="C:plasma membrane"/>
    <property type="evidence" value="ECO:0000250"/>
    <property type="project" value="UniProtKB"/>
</dbReference>
<dbReference type="GO" id="GO:0008076">
    <property type="term" value="C:voltage-gated potassium channel complex"/>
    <property type="evidence" value="ECO:0000250"/>
    <property type="project" value="UniProtKB"/>
</dbReference>
<dbReference type="GO" id="GO:0015459">
    <property type="term" value="F:potassium channel regulator activity"/>
    <property type="evidence" value="ECO:0000250"/>
    <property type="project" value="UniProtKB"/>
</dbReference>
<dbReference type="GO" id="GO:0005249">
    <property type="term" value="F:voltage-gated potassium channel activity"/>
    <property type="evidence" value="ECO:0007669"/>
    <property type="project" value="InterPro"/>
</dbReference>
<dbReference type="GO" id="GO:0001508">
    <property type="term" value="P:action potential"/>
    <property type="evidence" value="ECO:0000318"/>
    <property type="project" value="GO_Central"/>
</dbReference>
<dbReference type="GO" id="GO:0071805">
    <property type="term" value="P:potassium ion transmembrane transport"/>
    <property type="evidence" value="ECO:0000318"/>
    <property type="project" value="GO_Central"/>
</dbReference>
<dbReference type="GO" id="GO:0006813">
    <property type="term" value="P:potassium ion transport"/>
    <property type="evidence" value="ECO:0000250"/>
    <property type="project" value="UniProtKB"/>
</dbReference>
<dbReference type="GO" id="GO:0051260">
    <property type="term" value="P:protein homooligomerization"/>
    <property type="evidence" value="ECO:0007669"/>
    <property type="project" value="InterPro"/>
</dbReference>
<dbReference type="GO" id="GO:1901379">
    <property type="term" value="P:regulation of potassium ion transmembrane transport"/>
    <property type="evidence" value="ECO:0000250"/>
    <property type="project" value="UniProtKB"/>
</dbReference>
<dbReference type="FunFam" id="1.10.287.70:FF:000005">
    <property type="entry name" value="potassium voltage-gated channel subfamily G member 1"/>
    <property type="match status" value="1"/>
</dbReference>
<dbReference type="FunFam" id="3.30.710.10:FF:000102">
    <property type="entry name" value="Potassium voltage-gated channel subfamily S member 1"/>
    <property type="match status" value="1"/>
</dbReference>
<dbReference type="FunFam" id="1.20.120.350:FF:000029">
    <property type="entry name" value="Potassium voltage-gated channel subfamily S member 2"/>
    <property type="match status" value="1"/>
</dbReference>
<dbReference type="Gene3D" id="1.10.287.70">
    <property type="match status" value="1"/>
</dbReference>
<dbReference type="Gene3D" id="3.30.710.10">
    <property type="entry name" value="Potassium Channel Kv1.1, Chain A"/>
    <property type="match status" value="1"/>
</dbReference>
<dbReference type="Gene3D" id="1.20.120.350">
    <property type="entry name" value="Voltage-gated potassium channels. Chain C"/>
    <property type="match status" value="1"/>
</dbReference>
<dbReference type="InterPro" id="IPR000210">
    <property type="entry name" value="BTB/POZ_dom"/>
</dbReference>
<dbReference type="InterPro" id="IPR005821">
    <property type="entry name" value="Ion_trans_dom"/>
</dbReference>
<dbReference type="InterPro" id="IPR003968">
    <property type="entry name" value="K_chnl_volt-dep_Kv"/>
</dbReference>
<dbReference type="InterPro" id="IPR003971">
    <property type="entry name" value="K_chnl_volt-dep_Kv5/Kv9"/>
</dbReference>
<dbReference type="InterPro" id="IPR011333">
    <property type="entry name" value="SKP1/BTB/POZ_sf"/>
</dbReference>
<dbReference type="InterPro" id="IPR003131">
    <property type="entry name" value="T1-type_BTB"/>
</dbReference>
<dbReference type="InterPro" id="IPR028325">
    <property type="entry name" value="VG_K_chnl"/>
</dbReference>
<dbReference type="InterPro" id="IPR027359">
    <property type="entry name" value="Volt_channel_dom_sf"/>
</dbReference>
<dbReference type="PANTHER" id="PTHR11537:SF61">
    <property type="entry name" value="POTASSIUM VOLTAGE-GATED CHANNEL SUBFAMILY S MEMBER 1"/>
    <property type="match status" value="1"/>
</dbReference>
<dbReference type="PANTHER" id="PTHR11537">
    <property type="entry name" value="VOLTAGE-GATED POTASSIUM CHANNEL"/>
    <property type="match status" value="1"/>
</dbReference>
<dbReference type="Pfam" id="PF02214">
    <property type="entry name" value="BTB_2"/>
    <property type="match status" value="1"/>
</dbReference>
<dbReference type="Pfam" id="PF00520">
    <property type="entry name" value="Ion_trans"/>
    <property type="match status" value="1"/>
</dbReference>
<dbReference type="PRINTS" id="PR00169">
    <property type="entry name" value="KCHANNEL"/>
</dbReference>
<dbReference type="PRINTS" id="PR01494">
    <property type="entry name" value="KV9CHANNEL"/>
</dbReference>
<dbReference type="PRINTS" id="PR01491">
    <property type="entry name" value="KVCHANNEL"/>
</dbReference>
<dbReference type="SMART" id="SM00225">
    <property type="entry name" value="BTB"/>
    <property type="match status" value="1"/>
</dbReference>
<dbReference type="SUPFAM" id="SSF54695">
    <property type="entry name" value="POZ domain"/>
    <property type="match status" value="1"/>
</dbReference>
<dbReference type="SUPFAM" id="SSF81324">
    <property type="entry name" value="Voltage-gated potassium channels"/>
    <property type="match status" value="1"/>
</dbReference>
<evidence type="ECO:0000250" key="1">
    <source>
        <dbReference type="UniProtKB" id="O35173"/>
    </source>
</evidence>
<evidence type="ECO:0000250" key="2">
    <source>
        <dbReference type="UniProtKB" id="P63142"/>
    </source>
</evidence>
<evidence type="ECO:0000250" key="3">
    <source>
        <dbReference type="UniProtKB" id="Q96KK3"/>
    </source>
</evidence>
<evidence type="ECO:0000256" key="4">
    <source>
        <dbReference type="SAM" id="MobiDB-lite"/>
    </source>
</evidence>
<evidence type="ECO:0000269" key="5">
    <source>
    </source>
</evidence>
<evidence type="ECO:0000305" key="6"/>
<evidence type="ECO:0000312" key="7">
    <source>
        <dbReference type="RGD" id="621524"/>
    </source>
</evidence>
<proteinExistence type="evidence at transcript level"/>
<comment type="function">
    <text evidence="1 3">Potassium channel regulatory subunit that modulate the delayed rectifier voltage-gated potassium channel activity of KCNB1 and KCNB2 by altering their kinetics, expression levels, and shifting the half-inactivation potential to more polarized values. While it does not form functional channels on its own, it can form functional heterotetrameric channels with KCNB1 and KCNB2 (By similarity). Each regulatory subunit has unique regulatory properties that can lead to extensive inhibition, significant changes in kinetics, and/or substantial shifts in the voltage dependencies of the inactivation process (By similarity).</text>
</comment>
<comment type="subunit">
    <text evidence="1 3">Heterotetramer with KCNB1 (By similarity). Heterotetramer with KCNB2 (By similarity). Does not form homomultimers (By similarity).</text>
</comment>
<comment type="subcellular location">
    <subcellularLocation>
        <location evidence="3">Cell membrane</location>
        <topology evidence="3">Multi-pass membrane protein</topology>
    </subcellularLocation>
    <text evidence="3">May not reach the plasma membrane but remain in an intracellular compartment in the absence of KCNB1 or KCNB2.</text>
</comment>
<comment type="tissue specificity">
    <text evidence="5">Highly expressed in brain, but not in the other tissues tested (PubMed:9704029).</text>
</comment>
<comment type="domain">
    <text evidence="2">The transmembrane segment S4 functions as a voltage-sensor and is characterized by a series of positively charged amino acids at every third position. Channel opening and closing is effected by a conformation change that affects the position and orientation of the voltage-sensor paddle formed by S3 and S4 within the membrane. A transmembrane electric field that is positive inside would push the positively charged S4 segment outwards, thereby opening the pore, while a field that is negative inside would pull the S4 segment inwards and close the pore. Changes in the position and orientation of S4 are then transmitted to the activation gate formed by the inner helix bundle via the S4-S5 linker region.</text>
</comment>
<comment type="similarity">
    <text evidence="6">Belongs to the potassium channel family. S (TC 1.A.1.2) subfamily. Kv9.1/KCNS1 sub-subfamily.</text>
</comment>
<protein>
    <recommendedName>
        <fullName evidence="6">Delayed-rectifier potassium channel regulatory subunit KCNS1</fullName>
    </recommendedName>
    <alternativeName>
        <fullName>Delayed-rectifier K(+) channel alpha subunit 1</fullName>
    </alternativeName>
    <alternativeName>
        <fullName>Delayed-rectifier potassium channel subunit Kv9.1</fullName>
    </alternativeName>
    <alternativeName>
        <fullName>Potassium voltage-gated channel modifier subfamily S member 1</fullName>
    </alternativeName>
</protein>
<reference key="1">
    <citation type="journal article" date="1998" name="Biochem. Biophys. Res. Commun.">
        <title>Cloning and tissue distribution of two new potassium channel alpha-subunits from rat brain.</title>
        <authorList>
            <person name="Stocker M."/>
            <person name="Kerschensteiner D."/>
        </authorList>
    </citation>
    <scope>NUCLEOTIDE SEQUENCE [MRNA]</scope>
    <scope>TISSUE SPECIFICITY</scope>
    <source>
        <tissue>Brain</tissue>
    </source>
</reference>
<gene>
    <name evidence="7" type="primary">Kcns1</name>
</gene>
<sequence>MVSEFPGPGSRVPWRPRDEALRVNVGGVRRLLSARALARFPGTRLGRLQAAVSEEQARRLCDDYDAAAREFYFDRHPGFFLGLLHFYRTGHLHVLDELCVFAFGQEADYWGLGENALATCCRARYLERRVTRPRAWDEDSDAPSSVDPCPDEISDVQRELARYGAARCGRLRRRLWLTMENPGYSLPSKLFSCVSIGVVLASIAAMCIHSLPEYQAREAAAAVAAVAAGRSAEDVRDDPVLRRLEYFCIAWFSFEVSSRLLLAPSTRNFFCHPLNLIDIVSVLPFYLTLLAGAALGDRRGASGEELGDLGKVVQVFRLMRIFRVLKLARHSTGLRSLGATLKHSYREVGILLLYLAVGVSVFSGVAYTAEEKNVGFDTIPACWWWGTVSMTTVGYGDVVPETVAGKLAASGCILGGILVVALPITIIFNKFSHFYRRQKALEAAVRSSGQREFEDLLSSVDGVSDVSLETSRETSQEGRSTDLETQAPSEPAKSHSY</sequence>
<organism>
    <name type="scientific">Rattus norvegicus</name>
    <name type="common">Rat</name>
    <dbReference type="NCBI Taxonomy" id="10116"/>
    <lineage>
        <taxon>Eukaryota</taxon>
        <taxon>Metazoa</taxon>
        <taxon>Chordata</taxon>
        <taxon>Craniata</taxon>
        <taxon>Vertebrata</taxon>
        <taxon>Euteleostomi</taxon>
        <taxon>Mammalia</taxon>
        <taxon>Eutheria</taxon>
        <taxon>Euarchontoglires</taxon>
        <taxon>Glires</taxon>
        <taxon>Rodentia</taxon>
        <taxon>Myomorpha</taxon>
        <taxon>Muroidea</taxon>
        <taxon>Muridae</taxon>
        <taxon>Murinae</taxon>
        <taxon>Rattus</taxon>
    </lineage>
</organism>
<accession>O88758</accession>
<keyword id="KW-1003">Cell membrane</keyword>
<keyword id="KW-0407">Ion channel</keyword>
<keyword id="KW-0406">Ion transport</keyword>
<keyword id="KW-0472">Membrane</keyword>
<keyword id="KW-0630">Potassium</keyword>
<keyword id="KW-0631">Potassium channel</keyword>
<keyword id="KW-0633">Potassium transport</keyword>
<keyword id="KW-1185">Reference proteome</keyword>
<keyword id="KW-0812">Transmembrane</keyword>
<keyword id="KW-1133">Transmembrane helix</keyword>
<keyword id="KW-0813">Transport</keyword>
<keyword id="KW-0851">Voltage-gated channel</keyword>
<feature type="chain" id="PRO_0000054083" description="Delayed-rectifier potassium channel regulatory subunit KCNS1">
    <location>
        <begin position="1"/>
        <end position="497"/>
    </location>
</feature>
<feature type="topological domain" description="Cytoplasmic" evidence="2">
    <location>
        <begin position="1"/>
        <end position="186"/>
    </location>
</feature>
<feature type="transmembrane region" description="Helical; Name=Segment S1" evidence="2">
    <location>
        <begin position="187"/>
        <end position="208"/>
    </location>
</feature>
<feature type="topological domain" description="Extracellular" evidence="2">
    <location>
        <begin position="209"/>
        <end position="239"/>
    </location>
</feature>
<feature type="transmembrane region" description="Helical; Name=Segment S2" evidence="2">
    <location>
        <begin position="240"/>
        <end position="262"/>
    </location>
</feature>
<feature type="topological domain" description="Cytoplasmic" evidence="2">
    <location>
        <begin position="263"/>
        <end position="273"/>
    </location>
</feature>
<feature type="transmembrane region" description="Helical; Name=Segment S3" evidence="2">
    <location>
        <begin position="274"/>
        <end position="291"/>
    </location>
</feature>
<feature type="topological domain" description="Extracellular" evidence="2">
    <location>
        <begin position="292"/>
        <end position="309"/>
    </location>
</feature>
<feature type="transmembrane region" description="Helical; Voltage-sensor; Name=Segment S4" evidence="2">
    <location>
        <begin position="310"/>
        <end position="330"/>
    </location>
</feature>
<feature type="topological domain" description="Cytoplasmic" evidence="2">
    <location>
        <begin position="331"/>
        <end position="345"/>
    </location>
</feature>
<feature type="transmembrane region" description="Helical; Name=Segment S5" evidence="2">
    <location>
        <begin position="346"/>
        <end position="367"/>
    </location>
</feature>
<feature type="topological domain" description="Extracellular" evidence="2">
    <location>
        <begin position="368"/>
        <end position="379"/>
    </location>
</feature>
<feature type="intramembrane region" description="Helical; Name=Pore helix" evidence="2">
    <location>
        <begin position="380"/>
        <end position="391"/>
    </location>
</feature>
<feature type="intramembrane region" evidence="2">
    <location>
        <begin position="392"/>
        <end position="399"/>
    </location>
</feature>
<feature type="topological domain" description="Extracellular" evidence="2">
    <location>
        <begin position="400"/>
        <end position="406"/>
    </location>
</feature>
<feature type="transmembrane region" description="Helical; Name=Segment S6" evidence="2">
    <location>
        <begin position="407"/>
        <end position="435"/>
    </location>
</feature>
<feature type="topological domain" description="Cytoplasmic" evidence="2">
    <location>
        <begin position="436"/>
        <end position="497"/>
    </location>
</feature>
<feature type="region of interest" description="Disordered" evidence="4">
    <location>
        <begin position="464"/>
        <end position="497"/>
    </location>
</feature>
<feature type="short sequence motif" description="Selectivity filter" evidence="2">
    <location>
        <begin position="392"/>
        <end position="397"/>
    </location>
</feature>
<feature type="compositionally biased region" description="Basic and acidic residues" evidence="4">
    <location>
        <begin position="470"/>
        <end position="482"/>
    </location>
</feature>